<accession>A0Q529</accession>
<sequence length="935" mass="106793">MSDYKDTLNLPKTSFSMKGNLANKEPMILNKWEKQGIYKKIREHFAGREKFVLHDGPPYANGSIHVGHAVNKILKDIIIKSKTLSGYDAPFTPTWDCHGLPIELQVEKKHGKAGQSISEDDFRKECRKYAKKQVEIQKKDFKRLGVLGDWEQPYLTMNFDYEANMIRTLAKIIENGHLSKGFKPVHWCTDCGSALAEAEVEYADKISPAIDVKFKIKDKDKLAQAFGLDSLNHDAFAIIWTTTPWTLPANQAIAVNNQLNYSLIKIEDFYIILAENLVEQTLKRYAIENAQIIATTTGDKLTGIIAEHPFYSRHVPILHGDHVTDDSGTGLVHTAPTHGVDDFTLGKEHNLSMEIFVKGNGCYSENTKLFAGEFIFKANDRIIELLGEKKRLMNSDKIKHSYPHCWRHKTPLMFRATPQWFISMEKQGLRNKALQAIKETSWAPSWGQARIEGMVKDRPDWCISRQRTWGVPLPLFIHKETEELHPNTIEILHKVAEKIEKGGIEAWFNADDCEFITETAQYKSVKDTLDVWFDSGSSSMCILDLDKRLSYPADLYLEGSDQHRGWFQTSLLVAMSAKGSQPYKEVFTHGFVVDEHGRKMSKSLGNVTSPQDIYNTLGADILRLWTASTDYKSEMAVSDQILKRTADTYRRLRNTARFLLSNLDGFNPATDIIEFDKLVKLDQWAIAKTKEFQDKIIEAYDKYQTHTVAQLIHHFCSIEMGSFYLDIIKDRQYTAKTDGHPRKSAQTAIYHIVHALVRWMAPILSFTADEIWDATPKTTDLPIQLCEWYTGLKSFDQDAELDLEYWAKIQEIRSEVNRVLEIKRNEDVVKASLEAEITIYADKDNYKLLEKLGNELRFLLISSKADLKVIEESTSSSIAANIPGLSIEITKIEEPKCERCWHRSSTVGDNPQYKDICSRCVENITTEAGESREFA</sequence>
<comment type="function">
    <text evidence="1">Catalyzes the attachment of isoleucine to tRNA(Ile). As IleRS can inadvertently accommodate and process structurally similar amino acids such as valine, to avoid such errors it has two additional distinct tRNA(Ile)-dependent editing activities. One activity is designated as 'pretransfer' editing and involves the hydrolysis of activated Val-AMP. The other activity is designated 'posttransfer' editing and involves deacylation of mischarged Val-tRNA(Ile).</text>
</comment>
<comment type="catalytic activity">
    <reaction evidence="1">
        <text>tRNA(Ile) + L-isoleucine + ATP = L-isoleucyl-tRNA(Ile) + AMP + diphosphate</text>
        <dbReference type="Rhea" id="RHEA:11060"/>
        <dbReference type="Rhea" id="RHEA-COMP:9666"/>
        <dbReference type="Rhea" id="RHEA-COMP:9695"/>
        <dbReference type="ChEBI" id="CHEBI:30616"/>
        <dbReference type="ChEBI" id="CHEBI:33019"/>
        <dbReference type="ChEBI" id="CHEBI:58045"/>
        <dbReference type="ChEBI" id="CHEBI:78442"/>
        <dbReference type="ChEBI" id="CHEBI:78528"/>
        <dbReference type="ChEBI" id="CHEBI:456215"/>
        <dbReference type="EC" id="6.1.1.5"/>
    </reaction>
</comment>
<comment type="cofactor">
    <cofactor evidence="1">
        <name>Zn(2+)</name>
        <dbReference type="ChEBI" id="CHEBI:29105"/>
    </cofactor>
    <text evidence="1">Binds 1 zinc ion per subunit.</text>
</comment>
<comment type="subunit">
    <text evidence="1">Monomer.</text>
</comment>
<comment type="subcellular location">
    <subcellularLocation>
        <location evidence="1">Cytoplasm</location>
    </subcellularLocation>
</comment>
<comment type="domain">
    <text evidence="1">IleRS has two distinct active sites: one for aminoacylation and one for editing. The misactivated valine is translocated from the active site to the editing site, which sterically excludes the correctly activated isoleucine. The single editing site contains two valyl binding pockets, one specific for each substrate (Val-AMP or Val-tRNA(Ile)).</text>
</comment>
<comment type="similarity">
    <text evidence="1">Belongs to the class-I aminoacyl-tRNA synthetase family. IleS type 1 subfamily.</text>
</comment>
<gene>
    <name evidence="1" type="primary">ileS</name>
    <name type="ordered locus">FTN_0441</name>
</gene>
<keyword id="KW-0030">Aminoacyl-tRNA synthetase</keyword>
<keyword id="KW-0067">ATP-binding</keyword>
<keyword id="KW-0963">Cytoplasm</keyword>
<keyword id="KW-0436">Ligase</keyword>
<keyword id="KW-0479">Metal-binding</keyword>
<keyword id="KW-0547">Nucleotide-binding</keyword>
<keyword id="KW-0648">Protein biosynthesis</keyword>
<keyword id="KW-0862">Zinc</keyword>
<name>SYI_FRATN</name>
<organism>
    <name type="scientific">Francisella tularensis subsp. novicida (strain U112)</name>
    <dbReference type="NCBI Taxonomy" id="401614"/>
    <lineage>
        <taxon>Bacteria</taxon>
        <taxon>Pseudomonadati</taxon>
        <taxon>Pseudomonadota</taxon>
        <taxon>Gammaproteobacteria</taxon>
        <taxon>Thiotrichales</taxon>
        <taxon>Francisellaceae</taxon>
        <taxon>Francisella</taxon>
    </lineage>
</organism>
<proteinExistence type="inferred from homology"/>
<reference key="1">
    <citation type="journal article" date="2007" name="Genome Biol.">
        <title>Comparison of Francisella tularensis genomes reveals evolutionary events associated with the emergence of human pathogenic strains.</title>
        <authorList>
            <person name="Rohmer L."/>
            <person name="Fong C."/>
            <person name="Abmayr S."/>
            <person name="Wasnick M."/>
            <person name="Larson Freeman T.J."/>
            <person name="Radey M."/>
            <person name="Guina T."/>
            <person name="Svensson K."/>
            <person name="Hayden H.S."/>
            <person name="Jacobs M."/>
            <person name="Gallagher L.A."/>
            <person name="Manoil C."/>
            <person name="Ernst R.K."/>
            <person name="Drees B."/>
            <person name="Buckley D."/>
            <person name="Haugen E."/>
            <person name="Bovee D."/>
            <person name="Zhou Y."/>
            <person name="Chang J."/>
            <person name="Levy R."/>
            <person name="Lim R."/>
            <person name="Gillett W."/>
            <person name="Guenthener D."/>
            <person name="Kang A."/>
            <person name="Shaffer S.A."/>
            <person name="Taylor G."/>
            <person name="Chen J."/>
            <person name="Gallis B."/>
            <person name="D'Argenio D.A."/>
            <person name="Forsman M."/>
            <person name="Olson M.V."/>
            <person name="Goodlett D.R."/>
            <person name="Kaul R."/>
            <person name="Miller S.I."/>
            <person name="Brittnacher M.J."/>
        </authorList>
    </citation>
    <scope>NUCLEOTIDE SEQUENCE [LARGE SCALE GENOMIC DNA]</scope>
    <source>
        <strain>U112</strain>
    </source>
</reference>
<dbReference type="EC" id="6.1.1.5" evidence="1"/>
<dbReference type="EMBL" id="CP000439">
    <property type="protein sequence ID" value="ABK89344.1"/>
    <property type="molecule type" value="Genomic_DNA"/>
</dbReference>
<dbReference type="RefSeq" id="WP_003038463.1">
    <property type="nucleotide sequence ID" value="NC_008601.1"/>
</dbReference>
<dbReference type="SMR" id="A0Q529"/>
<dbReference type="KEGG" id="ftn:FTN_0441"/>
<dbReference type="KEGG" id="ftx:AW25_1593"/>
<dbReference type="BioCyc" id="FTUL401614:G1G75-460-MONOMER"/>
<dbReference type="Proteomes" id="UP000000762">
    <property type="component" value="Chromosome"/>
</dbReference>
<dbReference type="GO" id="GO:0005829">
    <property type="term" value="C:cytosol"/>
    <property type="evidence" value="ECO:0007669"/>
    <property type="project" value="TreeGrafter"/>
</dbReference>
<dbReference type="GO" id="GO:0002161">
    <property type="term" value="F:aminoacyl-tRNA deacylase activity"/>
    <property type="evidence" value="ECO:0007669"/>
    <property type="project" value="InterPro"/>
</dbReference>
<dbReference type="GO" id="GO:0005524">
    <property type="term" value="F:ATP binding"/>
    <property type="evidence" value="ECO:0007669"/>
    <property type="project" value="UniProtKB-UniRule"/>
</dbReference>
<dbReference type="GO" id="GO:0004822">
    <property type="term" value="F:isoleucine-tRNA ligase activity"/>
    <property type="evidence" value="ECO:0007669"/>
    <property type="project" value="UniProtKB-UniRule"/>
</dbReference>
<dbReference type="GO" id="GO:0000049">
    <property type="term" value="F:tRNA binding"/>
    <property type="evidence" value="ECO:0007669"/>
    <property type="project" value="InterPro"/>
</dbReference>
<dbReference type="GO" id="GO:0008270">
    <property type="term" value="F:zinc ion binding"/>
    <property type="evidence" value="ECO:0007669"/>
    <property type="project" value="UniProtKB-UniRule"/>
</dbReference>
<dbReference type="GO" id="GO:0006428">
    <property type="term" value="P:isoleucyl-tRNA aminoacylation"/>
    <property type="evidence" value="ECO:0007669"/>
    <property type="project" value="UniProtKB-UniRule"/>
</dbReference>
<dbReference type="CDD" id="cd07960">
    <property type="entry name" value="Anticodon_Ia_Ile_BEm"/>
    <property type="match status" value="1"/>
</dbReference>
<dbReference type="CDD" id="cd00818">
    <property type="entry name" value="IleRS_core"/>
    <property type="match status" value="1"/>
</dbReference>
<dbReference type="FunFam" id="1.10.730.20:FF:000001">
    <property type="entry name" value="Isoleucine--tRNA ligase"/>
    <property type="match status" value="1"/>
</dbReference>
<dbReference type="FunFam" id="3.40.50.620:FF:000042">
    <property type="entry name" value="Isoleucine--tRNA ligase"/>
    <property type="match status" value="1"/>
</dbReference>
<dbReference type="FunFam" id="3.40.50.620:FF:000048">
    <property type="entry name" value="Isoleucine--tRNA ligase"/>
    <property type="match status" value="1"/>
</dbReference>
<dbReference type="Gene3D" id="1.10.730.20">
    <property type="match status" value="1"/>
</dbReference>
<dbReference type="Gene3D" id="3.40.50.620">
    <property type="entry name" value="HUPs"/>
    <property type="match status" value="2"/>
</dbReference>
<dbReference type="Gene3D" id="3.90.740.10">
    <property type="entry name" value="Valyl/Leucyl/Isoleucyl-tRNA synthetase, editing domain"/>
    <property type="match status" value="1"/>
</dbReference>
<dbReference type="HAMAP" id="MF_02002">
    <property type="entry name" value="Ile_tRNA_synth_type1"/>
    <property type="match status" value="1"/>
</dbReference>
<dbReference type="InterPro" id="IPR001412">
    <property type="entry name" value="aa-tRNA-synth_I_CS"/>
</dbReference>
<dbReference type="InterPro" id="IPR002300">
    <property type="entry name" value="aa-tRNA-synth_Ia"/>
</dbReference>
<dbReference type="InterPro" id="IPR033708">
    <property type="entry name" value="Anticodon_Ile_BEm"/>
</dbReference>
<dbReference type="InterPro" id="IPR002301">
    <property type="entry name" value="Ile-tRNA-ligase"/>
</dbReference>
<dbReference type="InterPro" id="IPR023585">
    <property type="entry name" value="Ile-tRNA-ligase_type1"/>
</dbReference>
<dbReference type="InterPro" id="IPR050081">
    <property type="entry name" value="Ile-tRNA_ligase"/>
</dbReference>
<dbReference type="InterPro" id="IPR013155">
    <property type="entry name" value="M/V/L/I-tRNA-synth_anticd-bd"/>
</dbReference>
<dbReference type="InterPro" id="IPR014729">
    <property type="entry name" value="Rossmann-like_a/b/a_fold"/>
</dbReference>
<dbReference type="InterPro" id="IPR009080">
    <property type="entry name" value="tRNAsynth_Ia_anticodon-bd"/>
</dbReference>
<dbReference type="InterPro" id="IPR009008">
    <property type="entry name" value="Val/Leu/Ile-tRNA-synth_edit"/>
</dbReference>
<dbReference type="InterPro" id="IPR010663">
    <property type="entry name" value="Znf_FPG/IleRS"/>
</dbReference>
<dbReference type="NCBIfam" id="TIGR00392">
    <property type="entry name" value="ileS"/>
    <property type="match status" value="1"/>
</dbReference>
<dbReference type="PANTHER" id="PTHR42765:SF1">
    <property type="entry name" value="ISOLEUCINE--TRNA LIGASE, MITOCHONDRIAL"/>
    <property type="match status" value="1"/>
</dbReference>
<dbReference type="PANTHER" id="PTHR42765">
    <property type="entry name" value="SOLEUCYL-TRNA SYNTHETASE"/>
    <property type="match status" value="1"/>
</dbReference>
<dbReference type="Pfam" id="PF08264">
    <property type="entry name" value="Anticodon_1"/>
    <property type="match status" value="1"/>
</dbReference>
<dbReference type="Pfam" id="PF00133">
    <property type="entry name" value="tRNA-synt_1"/>
    <property type="match status" value="1"/>
</dbReference>
<dbReference type="Pfam" id="PF06827">
    <property type="entry name" value="zf-FPG_IleRS"/>
    <property type="match status" value="1"/>
</dbReference>
<dbReference type="PRINTS" id="PR00984">
    <property type="entry name" value="TRNASYNTHILE"/>
</dbReference>
<dbReference type="SUPFAM" id="SSF47323">
    <property type="entry name" value="Anticodon-binding domain of a subclass of class I aminoacyl-tRNA synthetases"/>
    <property type="match status" value="1"/>
</dbReference>
<dbReference type="SUPFAM" id="SSF52374">
    <property type="entry name" value="Nucleotidylyl transferase"/>
    <property type="match status" value="1"/>
</dbReference>
<dbReference type="SUPFAM" id="SSF50677">
    <property type="entry name" value="ValRS/IleRS/LeuRS editing domain"/>
    <property type="match status" value="1"/>
</dbReference>
<dbReference type="PROSITE" id="PS00178">
    <property type="entry name" value="AA_TRNA_LIGASE_I"/>
    <property type="match status" value="1"/>
</dbReference>
<feature type="chain" id="PRO_1000022068" description="Isoleucine--tRNA ligase">
    <location>
        <begin position="1"/>
        <end position="935"/>
    </location>
</feature>
<feature type="short sequence motif" description="'HIGH' region">
    <location>
        <begin position="58"/>
        <end position="68"/>
    </location>
</feature>
<feature type="short sequence motif" description="'KMSKS' region">
    <location>
        <begin position="599"/>
        <end position="603"/>
    </location>
</feature>
<feature type="binding site" evidence="1">
    <location>
        <position position="558"/>
    </location>
    <ligand>
        <name>L-isoleucyl-5'-AMP</name>
        <dbReference type="ChEBI" id="CHEBI:178002"/>
    </ligand>
</feature>
<feature type="binding site" evidence="1">
    <location>
        <position position="602"/>
    </location>
    <ligand>
        <name>ATP</name>
        <dbReference type="ChEBI" id="CHEBI:30616"/>
    </ligand>
</feature>
<feature type="binding site" evidence="1">
    <location>
        <position position="897"/>
    </location>
    <ligand>
        <name>Zn(2+)</name>
        <dbReference type="ChEBI" id="CHEBI:29105"/>
    </ligand>
</feature>
<feature type="binding site" evidence="1">
    <location>
        <position position="900"/>
    </location>
    <ligand>
        <name>Zn(2+)</name>
        <dbReference type="ChEBI" id="CHEBI:29105"/>
    </ligand>
</feature>
<feature type="binding site" evidence="1">
    <location>
        <position position="917"/>
    </location>
    <ligand>
        <name>Zn(2+)</name>
        <dbReference type="ChEBI" id="CHEBI:29105"/>
    </ligand>
</feature>
<feature type="binding site" evidence="1">
    <location>
        <position position="920"/>
    </location>
    <ligand>
        <name>Zn(2+)</name>
        <dbReference type="ChEBI" id="CHEBI:29105"/>
    </ligand>
</feature>
<protein>
    <recommendedName>
        <fullName evidence="1">Isoleucine--tRNA ligase</fullName>
        <ecNumber evidence="1">6.1.1.5</ecNumber>
    </recommendedName>
    <alternativeName>
        <fullName evidence="1">Isoleucyl-tRNA synthetase</fullName>
        <shortName evidence="1">IleRS</shortName>
    </alternativeName>
</protein>
<evidence type="ECO:0000255" key="1">
    <source>
        <dbReference type="HAMAP-Rule" id="MF_02002"/>
    </source>
</evidence>